<protein>
    <recommendedName>
        <fullName evidence="1">Serine hydroxymethyltransferase</fullName>
        <shortName evidence="1">SHMT</shortName>
        <shortName evidence="1">Serine methylase</shortName>
        <ecNumber evidence="1">2.1.2.1</ecNumber>
    </recommendedName>
</protein>
<dbReference type="EC" id="2.1.2.1" evidence="1"/>
<dbReference type="EMBL" id="CP001251">
    <property type="protein sequence ID" value="ACK42091.1"/>
    <property type="molecule type" value="Genomic_DNA"/>
</dbReference>
<dbReference type="RefSeq" id="WP_012583175.1">
    <property type="nucleotide sequence ID" value="NC_011661.1"/>
</dbReference>
<dbReference type="RefSeq" id="YP_002352705.1">
    <property type="nucleotide sequence ID" value="NC_011661.1"/>
</dbReference>
<dbReference type="SMR" id="B8E008"/>
<dbReference type="FunCoup" id="B8E008">
    <property type="interactions" value="368"/>
</dbReference>
<dbReference type="STRING" id="515635.Dtur_0810"/>
<dbReference type="EnsemblBacteria" id="ACK42091">
    <property type="protein sequence ID" value="ACK42091"/>
    <property type="gene ID" value="Dtur_0810"/>
</dbReference>
<dbReference type="KEGG" id="dtu:Dtur_0810"/>
<dbReference type="PATRIC" id="fig|515635.4.peg.848"/>
<dbReference type="eggNOG" id="COG0112">
    <property type="taxonomic scope" value="Bacteria"/>
</dbReference>
<dbReference type="HOGENOM" id="CLU_022477_2_1_0"/>
<dbReference type="InParanoid" id="B8E008"/>
<dbReference type="OrthoDB" id="9803846at2"/>
<dbReference type="UniPathway" id="UPA00193"/>
<dbReference type="UniPathway" id="UPA00288">
    <property type="reaction ID" value="UER01023"/>
</dbReference>
<dbReference type="Proteomes" id="UP000007719">
    <property type="component" value="Chromosome"/>
</dbReference>
<dbReference type="GO" id="GO:0005737">
    <property type="term" value="C:cytoplasm"/>
    <property type="evidence" value="ECO:0000318"/>
    <property type="project" value="GO_Central"/>
</dbReference>
<dbReference type="GO" id="GO:0005829">
    <property type="term" value="C:cytosol"/>
    <property type="evidence" value="ECO:0000318"/>
    <property type="project" value="GO_Central"/>
</dbReference>
<dbReference type="GO" id="GO:0004372">
    <property type="term" value="F:glycine hydroxymethyltransferase activity"/>
    <property type="evidence" value="ECO:0000318"/>
    <property type="project" value="GO_Central"/>
</dbReference>
<dbReference type="GO" id="GO:0030170">
    <property type="term" value="F:pyridoxal phosphate binding"/>
    <property type="evidence" value="ECO:0000318"/>
    <property type="project" value="GO_Central"/>
</dbReference>
<dbReference type="GO" id="GO:0019264">
    <property type="term" value="P:glycine biosynthetic process from serine"/>
    <property type="evidence" value="ECO:0000318"/>
    <property type="project" value="GO_Central"/>
</dbReference>
<dbReference type="GO" id="GO:0035999">
    <property type="term" value="P:tetrahydrofolate interconversion"/>
    <property type="evidence" value="ECO:0007669"/>
    <property type="project" value="UniProtKB-UniRule"/>
</dbReference>
<dbReference type="GO" id="GO:0046653">
    <property type="term" value="P:tetrahydrofolate metabolic process"/>
    <property type="evidence" value="ECO:0000318"/>
    <property type="project" value="GO_Central"/>
</dbReference>
<dbReference type="CDD" id="cd00378">
    <property type="entry name" value="SHMT"/>
    <property type="match status" value="1"/>
</dbReference>
<dbReference type="FunFam" id="3.40.640.10:FF:000001">
    <property type="entry name" value="Serine hydroxymethyltransferase"/>
    <property type="match status" value="1"/>
</dbReference>
<dbReference type="FunFam" id="3.90.1150.10:FF:000003">
    <property type="entry name" value="Serine hydroxymethyltransferase"/>
    <property type="match status" value="1"/>
</dbReference>
<dbReference type="Gene3D" id="3.90.1150.10">
    <property type="entry name" value="Aspartate Aminotransferase, domain 1"/>
    <property type="match status" value="1"/>
</dbReference>
<dbReference type="Gene3D" id="3.40.640.10">
    <property type="entry name" value="Type I PLP-dependent aspartate aminotransferase-like (Major domain)"/>
    <property type="match status" value="1"/>
</dbReference>
<dbReference type="HAMAP" id="MF_00051">
    <property type="entry name" value="SHMT"/>
    <property type="match status" value="1"/>
</dbReference>
<dbReference type="InterPro" id="IPR015424">
    <property type="entry name" value="PyrdxlP-dep_Trfase"/>
</dbReference>
<dbReference type="InterPro" id="IPR015421">
    <property type="entry name" value="PyrdxlP-dep_Trfase_major"/>
</dbReference>
<dbReference type="InterPro" id="IPR015422">
    <property type="entry name" value="PyrdxlP-dep_Trfase_small"/>
</dbReference>
<dbReference type="InterPro" id="IPR001085">
    <property type="entry name" value="Ser_HO-MeTrfase"/>
</dbReference>
<dbReference type="InterPro" id="IPR049943">
    <property type="entry name" value="Ser_HO-MeTrfase-like"/>
</dbReference>
<dbReference type="InterPro" id="IPR019798">
    <property type="entry name" value="Ser_HO-MeTrfase_PLP_BS"/>
</dbReference>
<dbReference type="InterPro" id="IPR039429">
    <property type="entry name" value="SHMT-like_dom"/>
</dbReference>
<dbReference type="NCBIfam" id="NF000586">
    <property type="entry name" value="PRK00011.1"/>
    <property type="match status" value="1"/>
</dbReference>
<dbReference type="PANTHER" id="PTHR11680">
    <property type="entry name" value="SERINE HYDROXYMETHYLTRANSFERASE"/>
    <property type="match status" value="1"/>
</dbReference>
<dbReference type="PANTHER" id="PTHR11680:SF35">
    <property type="entry name" value="SERINE HYDROXYMETHYLTRANSFERASE 1"/>
    <property type="match status" value="1"/>
</dbReference>
<dbReference type="Pfam" id="PF00464">
    <property type="entry name" value="SHMT"/>
    <property type="match status" value="1"/>
</dbReference>
<dbReference type="PIRSF" id="PIRSF000412">
    <property type="entry name" value="SHMT"/>
    <property type="match status" value="1"/>
</dbReference>
<dbReference type="SUPFAM" id="SSF53383">
    <property type="entry name" value="PLP-dependent transferases"/>
    <property type="match status" value="1"/>
</dbReference>
<dbReference type="PROSITE" id="PS00096">
    <property type="entry name" value="SHMT"/>
    <property type="match status" value="1"/>
</dbReference>
<evidence type="ECO:0000255" key="1">
    <source>
        <dbReference type="HAMAP-Rule" id="MF_00051"/>
    </source>
</evidence>
<feature type="chain" id="PRO_1000116827" description="Serine hydroxymethyltransferase">
    <location>
        <begin position="1"/>
        <end position="414"/>
    </location>
</feature>
<feature type="binding site" evidence="1">
    <location>
        <position position="117"/>
    </location>
    <ligand>
        <name>(6S)-5,6,7,8-tetrahydrofolate</name>
        <dbReference type="ChEBI" id="CHEBI:57453"/>
    </ligand>
</feature>
<feature type="binding site" evidence="1">
    <location>
        <begin position="121"/>
        <end position="123"/>
    </location>
    <ligand>
        <name>(6S)-5,6,7,8-tetrahydrofolate</name>
        <dbReference type="ChEBI" id="CHEBI:57453"/>
    </ligand>
</feature>
<feature type="site" description="Plays an important role in substrate specificity" evidence="1">
    <location>
        <position position="225"/>
    </location>
</feature>
<feature type="modified residue" description="N6-(pyridoxal phosphate)lysine" evidence="1">
    <location>
        <position position="226"/>
    </location>
</feature>
<keyword id="KW-0028">Amino-acid biosynthesis</keyword>
<keyword id="KW-0963">Cytoplasm</keyword>
<keyword id="KW-0554">One-carbon metabolism</keyword>
<keyword id="KW-0663">Pyridoxal phosphate</keyword>
<keyword id="KW-1185">Reference proteome</keyword>
<keyword id="KW-0808">Transferase</keyword>
<comment type="function">
    <text evidence="1">Catalyzes the reversible interconversion of serine and glycine with tetrahydrofolate (THF) serving as the one-carbon carrier. This reaction serves as the major source of one-carbon groups required for the biosynthesis of purines, thymidylate, methionine, and other important biomolecules. Also exhibits THF-independent aldolase activity toward beta-hydroxyamino acids, producing glycine and aldehydes, via a retro-aldol mechanism.</text>
</comment>
<comment type="catalytic activity">
    <reaction evidence="1">
        <text>(6R)-5,10-methylene-5,6,7,8-tetrahydrofolate + glycine + H2O = (6S)-5,6,7,8-tetrahydrofolate + L-serine</text>
        <dbReference type="Rhea" id="RHEA:15481"/>
        <dbReference type="ChEBI" id="CHEBI:15377"/>
        <dbReference type="ChEBI" id="CHEBI:15636"/>
        <dbReference type="ChEBI" id="CHEBI:33384"/>
        <dbReference type="ChEBI" id="CHEBI:57305"/>
        <dbReference type="ChEBI" id="CHEBI:57453"/>
        <dbReference type="EC" id="2.1.2.1"/>
    </reaction>
</comment>
<comment type="cofactor">
    <cofactor evidence="1">
        <name>pyridoxal 5'-phosphate</name>
        <dbReference type="ChEBI" id="CHEBI:597326"/>
    </cofactor>
</comment>
<comment type="pathway">
    <text evidence="1">One-carbon metabolism; tetrahydrofolate interconversion.</text>
</comment>
<comment type="pathway">
    <text evidence="1">Amino-acid biosynthesis; glycine biosynthesis; glycine from L-serine: step 1/1.</text>
</comment>
<comment type="subunit">
    <text evidence="1">Homodimer.</text>
</comment>
<comment type="subcellular location">
    <subcellularLocation>
        <location evidence="1">Cytoplasm</location>
    </subcellularLocation>
</comment>
<comment type="similarity">
    <text evidence="1">Belongs to the SHMT family.</text>
</comment>
<organism>
    <name type="scientific">Dictyoglomus turgidum (strain DSM 6724 / Z-1310)</name>
    <dbReference type="NCBI Taxonomy" id="515635"/>
    <lineage>
        <taxon>Bacteria</taxon>
        <taxon>Pseudomonadati</taxon>
        <taxon>Dictyoglomota</taxon>
        <taxon>Dictyoglomia</taxon>
        <taxon>Dictyoglomales</taxon>
        <taxon>Dictyoglomaceae</taxon>
        <taxon>Dictyoglomus</taxon>
    </lineage>
</organism>
<gene>
    <name evidence="1" type="primary">glyA</name>
    <name type="ordered locus">Dtur_0810</name>
</gene>
<accession>B8E008</accession>
<reference key="1">
    <citation type="journal article" date="2016" name="Front. Microbiol.">
        <title>The complete genome sequence of hyperthermophile Dictyoglomus turgidum DSM 6724 reveals a specialized carbohydrate fermentor.</title>
        <authorList>
            <person name="Brumm P.J."/>
            <person name="Gowda K."/>
            <person name="Robb F.T."/>
            <person name="Mead D.A."/>
        </authorList>
    </citation>
    <scope>NUCLEOTIDE SEQUENCE [LARGE SCALE GENOMIC DNA]</scope>
    <source>
        <strain>DSM 6724 / Z-1310</strain>
    </source>
</reference>
<sequence>MRYLPEVDPEIYEAIKSEEYREEYHLELIASENFVSRAVLEAQGSVLTNKYAEGYPGKRYYGGCLYVDKVEDIARERVKAIYGAEHANVQPHSGSQANMAVYFVVLNPGDRVLGMNLAHGGHLTHGSPVNFSGKLYNFYFYGVDKNTEMINYDSVWNLAKELKPKLIVAGASAYPRIIDFEKFAQIAEDVGAYFMVDMAHIAGLVAAGLHPSPVPYAHFVTSTTHKTLRGPRGGFILCKKEFAKEIDKAVFPGIQGGPLMHVIAAKAVAFKEAMSPEFKEYQKQIVLNAKAMAEELIKLGYRLVSGGTDNHLMLVDLRDKGITGKEAEKALEEAGITVNKNAIPFDPQPPTITSGIRIGTPALTTRGMKEDEMRYIARLIHEVLSNFKDERVKEKVKKEVEELCKQFPIYRKEN</sequence>
<proteinExistence type="inferred from homology"/>
<name>GLYA_DICTD</name>